<protein>
    <recommendedName>
        <fullName>Apolipoprotein A-V</fullName>
        <shortName>Apo-AV</shortName>
        <shortName>ApoA-V</shortName>
    </recommendedName>
    <alternativeName>
        <fullName>Apolipoprotein A5</fullName>
    </alternativeName>
    <alternativeName>
        <fullName>Regeneration-associated protein 3</fullName>
    </alternativeName>
</protein>
<gene>
    <name type="primary">APOA5</name>
    <name type="synonym">RAP3</name>
    <name type="ORF">UNQ411/PRO773</name>
</gene>
<organism>
    <name type="scientific">Homo sapiens</name>
    <name type="common">Human</name>
    <dbReference type="NCBI Taxonomy" id="9606"/>
    <lineage>
        <taxon>Eukaryota</taxon>
        <taxon>Metazoa</taxon>
        <taxon>Chordata</taxon>
        <taxon>Craniata</taxon>
        <taxon>Vertebrata</taxon>
        <taxon>Euteleostomi</taxon>
        <taxon>Mammalia</taxon>
        <taxon>Eutheria</taxon>
        <taxon>Euarchontoglires</taxon>
        <taxon>Primates</taxon>
        <taxon>Haplorrhini</taxon>
        <taxon>Catarrhini</taxon>
        <taxon>Hominidae</taxon>
        <taxon>Homo</taxon>
    </lineage>
</organism>
<accession>Q6Q788</accession>
<accession>B0YIV9</accession>
<accession>Q3MIK6</accession>
<accession>Q6UWK9</accession>
<accession>Q9UBJ3</accession>
<evidence type="ECO:0000250" key="1">
    <source>
        <dbReference type="UniProtKB" id="Q8C7G5"/>
    </source>
</evidence>
<evidence type="ECO:0000255" key="2"/>
<evidence type="ECO:0000269" key="3">
    <source>
    </source>
</evidence>
<evidence type="ECO:0000269" key="4">
    <source>
    </source>
</evidence>
<evidence type="ECO:0000269" key="5">
    <source>
    </source>
</evidence>
<evidence type="ECO:0000269" key="6">
    <source>
    </source>
</evidence>
<evidence type="ECO:0000269" key="7">
    <source>
    </source>
</evidence>
<evidence type="ECO:0000269" key="8">
    <source>
    </source>
</evidence>
<evidence type="ECO:0000269" key="9">
    <source>
    </source>
</evidence>
<evidence type="ECO:0000269" key="10">
    <source>
    </source>
</evidence>
<evidence type="ECO:0000269" key="11">
    <source>
    </source>
</evidence>
<evidence type="ECO:0000269" key="12">
    <source>
    </source>
</evidence>
<evidence type="ECO:0000269" key="13">
    <source>
    </source>
</evidence>
<evidence type="ECO:0000269" key="14">
    <source>
    </source>
</evidence>
<evidence type="ECO:0000269" key="15">
    <source>
    </source>
</evidence>
<evidence type="ECO:0000269" key="16">
    <source>
    </source>
</evidence>
<evidence type="ECO:0000269" key="17">
    <source>
    </source>
</evidence>
<evidence type="ECO:0000305" key="18"/>
<evidence type="ECO:0007744" key="19">
    <source>
    </source>
</evidence>
<proteinExistence type="evidence at protein level"/>
<name>APOA5_HUMAN</name>
<keyword id="KW-0162">Chylomicron</keyword>
<keyword id="KW-0175">Coiled coil</keyword>
<keyword id="KW-0225">Disease variant</keyword>
<keyword id="KW-0967">Endosome</keyword>
<keyword id="KW-0333">Golgi apparatus</keyword>
<keyword id="KW-0345">HDL</keyword>
<keyword id="KW-0445">Lipid transport</keyword>
<keyword id="KW-0597">Phosphoprotein</keyword>
<keyword id="KW-1267">Proteomics identification</keyword>
<keyword id="KW-1185">Reference proteome</keyword>
<keyword id="KW-0964">Secreted</keyword>
<keyword id="KW-0732">Signal</keyword>
<keyword id="KW-0813">Transport</keyword>
<keyword id="KW-0850">VLDL</keyword>
<sequence length="366" mass="41213">MASMAAVLTWALALLSAFSATQARKGFWDYFSQTSGDKGRVEQIHQQKMAREPATLKDSLEQDLNNMNKFLEKLRPLSGSEAPRLPQDPVGMRRQLQEELEEVKARLQPYMAEAHELVGWNLEGLRQQLKPYTMDLMEQVALRVQELQEQLRVVGEDTKAQLLGGVDEAWALLQGLQSRVVHHTGRFKELFHPYAESLVSGIGRHVQELHRSVAPHAPASPARLSRCVQVLSRKLTLKAKALHARIQQNLDQLREELSRAFAGTGTEEGAGPDPQMLSEEVRQRLQAFRQDTYLQIAAFTRAIDQETEEVQQQLAPPPPGHSAFAPEFQQTDSGKVLSKLQARLDDLWEDITHSLHDQGHSHLGDP</sequence>
<comment type="function">
    <text evidence="1 4 8 12 14">Minor apolipoprotein mainly associated with HDL and to a lesser extent with VLDL. May also be associated with chylomicrons. Important determinant of plasma triglyceride (TG) levels by both being a potent stimulator of apo-CII lipoprotein lipase (LPL) TG hydrolysis and an inhibitor of the hepatic VLDL-TG production rate (without affecting the VLDL-apoB production rate) (By similarity). Activates poorly lecithin:cholesterol acyltransferase (LCAT) and does not enhance efflux of cholesterol from macrophages. Binds heparin (PubMed:17326667).</text>
</comment>
<comment type="subunit">
    <text evidence="14 15 16">Interacts with GPIHBP1 (PubMed:17997385). Interacts with SORL1; this interaction leads to APOA5 internalization and sorting either to lysosomes and degradation, or to the trans-Golgi network (PubMed:17326667, PubMed:18603531).</text>
</comment>
<comment type="interaction">
    <interactant intactId="EBI-3936819">
        <id>Q6Q788</id>
    </interactant>
    <interactant intactId="EBI-2876502">
        <id>Q96CM8</id>
        <label>ACSF2</label>
    </interactant>
    <organismsDiffer>false</organismsDiffer>
    <experiments>3</experiments>
</comment>
<comment type="interaction">
    <interactant intactId="EBI-3936819">
        <id>Q6Q788</id>
    </interactant>
    <interactant intactId="EBI-3922513">
        <id>O95393</id>
        <label>BMP10</label>
    </interactant>
    <organismsDiffer>false</organismsDiffer>
    <experiments>3</experiments>
</comment>
<comment type="interaction">
    <interactant intactId="EBI-3936819">
        <id>Q6Q788</id>
    </interactant>
    <interactant intactId="EBI-7247651">
        <id>Q96MX0</id>
        <label>CMTM3</label>
    </interactant>
    <organismsDiffer>false</organismsDiffer>
    <experiments>3</experiments>
</comment>
<comment type="interaction">
    <interactant intactId="EBI-3936819">
        <id>Q6Q788</id>
    </interactant>
    <interactant intactId="EBI-11522780">
        <id>Q96DZ9-2</id>
        <label>CMTM5</label>
    </interactant>
    <organismsDiffer>false</organismsDiffer>
    <experiments>3</experiments>
</comment>
<comment type="interaction">
    <interactant intactId="EBI-3936819">
        <id>Q6Q788</id>
    </interactant>
    <interactant intactId="EBI-1054315">
        <id>Q9NX76</id>
        <label>CMTM6</label>
    </interactant>
    <organismsDiffer>false</organismsDiffer>
    <experiments>3</experiments>
</comment>
<comment type="interaction">
    <interactant intactId="EBI-3936819">
        <id>Q6Q788</id>
    </interactant>
    <interactant intactId="EBI-10269566">
        <id>Q8NDC4</id>
        <label>MORN4</label>
    </interactant>
    <organismsDiffer>false</organismsDiffer>
    <experiments>3</experiments>
</comment>
<comment type="interaction">
    <interactant intactId="EBI-3936819">
        <id>Q6Q788</id>
    </interactant>
    <interactant intactId="EBI-709754">
        <id>Q9HB07</id>
        <label>MYG1</label>
    </interactant>
    <organismsDiffer>false</organismsDiffer>
    <experiments>3</experiments>
</comment>
<comment type="interaction">
    <interactant intactId="EBI-3936819">
        <id>Q6Q788</id>
    </interactant>
    <interactant intactId="EBI-398970">
        <id>Q9BQE4</id>
        <label>SELENOS</label>
    </interactant>
    <organismsDiffer>false</organismsDiffer>
    <experiments>3</experiments>
</comment>
<comment type="interaction">
    <interactant intactId="EBI-3936819">
        <id>Q6Q788</id>
    </interactant>
    <interactant intactId="EBI-10171534">
        <id>A0PK00</id>
        <label>TMEM120B</label>
    </interactant>
    <organismsDiffer>false</organismsDiffer>
    <experiments>3</experiments>
</comment>
<comment type="interaction">
    <interactant intactId="EBI-3936819">
        <id>Q6Q788</id>
    </interactant>
    <interactant intactId="EBI-741829">
        <id>Q96HH6</id>
        <label>TMEM19</label>
    </interactant>
    <organismsDiffer>false</organismsDiffer>
    <experiments>3</experiments>
</comment>
<comment type="interaction">
    <interactant intactId="EBI-3936819">
        <id>Q6Q788</id>
    </interactant>
    <interactant intactId="EBI-721293">
        <id>Q9BTV4</id>
        <label>TMEM43</label>
    </interactant>
    <organismsDiffer>false</organismsDiffer>
    <experiments>3</experiments>
</comment>
<comment type="interaction">
    <interactant intactId="EBI-3936819">
        <id>Q6Q788</id>
    </interactant>
    <interactant intactId="EBI-10210710">
        <id>P49638</id>
        <label>TTPA</label>
    </interactant>
    <organismsDiffer>false</organismsDiffer>
    <experiments>3</experiments>
</comment>
<comment type="interaction">
    <interactant intactId="EBI-3936819">
        <id>Q6Q788</id>
    </interactant>
    <interactant intactId="EBI-2799703">
        <id>O95070</id>
        <label>YIF1A</label>
    </interactant>
    <organismsDiffer>false</organismsDiffer>
    <experiments>3</experiments>
</comment>
<comment type="subcellular location">
    <subcellularLocation>
        <location evidence="7">Secreted</location>
    </subcellularLocation>
    <subcellularLocation>
        <location evidence="16">Early endosome</location>
    </subcellularLocation>
    <subcellularLocation>
        <location evidence="16">Late endosome</location>
    </subcellularLocation>
    <subcellularLocation>
        <location evidence="16">Golgi apparatus</location>
        <location evidence="16">trans-Golgi network</location>
    </subcellularLocation>
    <text evidence="16">In the presence of SORL1, internalized to early endosomes, sorted in a retrograde fashion to late endosomes, from which a portion is sent to lysosomes and degradation, another portion is sorted to the trans-Golgi network.</text>
</comment>
<comment type="tissue specificity">
    <text evidence="3 4 12">Liver and plasma.</text>
</comment>
<comment type="induction">
    <text evidence="6">Up-regulated by PPARA agonists, which are used clinically to lower serum TG (such as fibrates).</text>
</comment>
<comment type="PTM">
    <text evidence="17">Phosphorylated by FAM20C in the extracellular medium.</text>
</comment>
<comment type="polymorphism">
    <text evidence="5">Three common alleles are known: allele APOA5*1, APOA5*2 and APOA5*3. The APOA5*2 haplotype, which consists of 3 non-coding SNPs, is present in approximately 16% of Caucasians and is associated with increased plasma triglyceride concentrations. APOA5*3 haplotype is defined by the rare Ser-19-Trp substitution. Together, the APOA5*2 and APOA5*3 haplotypes are found in 25 to 50% of African Americans, Hispanics, and Caucasians.</text>
</comment>
<comment type="disease">
    <disease id="DI-01586">
        <name>Hypertriglyceridemia 1</name>
        <acronym>HYTG1</acronym>
        <description>A common inherited disorder in which the concentration of very low density lipoprotein (VLDL) is elevated in the plasma. This leads to increased risk of heart disease, obesity, and pancreatitis. Inheritance is autosomal dominant.</description>
        <dbReference type="MIM" id="145750"/>
    </disease>
    <text>Disease susceptibility is associated with variants affecting the gene represented in this entry.</text>
</comment>
<comment type="disease" evidence="13">
    <disease id="DI-01772">
        <name>Hyperlipoproteinemia 5</name>
        <acronym>HLPP5</acronym>
        <description>Characterized by increased amounts of chylomicrons and very low density lipoprotein (VLDL) and decreased low density lipoprotein (LDL) and high density lipoprotein (HDL) in the plasma after a fast. Numerous conditions cause this phenotype, including insulin-dependent diabetes mellitus, contraceptive steroids, alcohol abuse, and glycogen storage disease type 1A (GSD1A).</description>
        <dbReference type="MIM" id="144650"/>
    </disease>
    <text>The disease is caused by variants affecting the gene represented in this entry.</text>
</comment>
<comment type="miscellaneous">
    <text>Induced in early phase of liver regeneration.</text>
</comment>
<comment type="similarity">
    <text evidence="18">Belongs to the apolipoprotein A1/A4/E family.</text>
</comment>
<comment type="caution">
    <text evidence="18">It is uncertain whether Met-1 or Met-4 is the initiator.</text>
</comment>
<comment type="sequence caution" evidence="18">
    <conflict type="erroneous initiation">
        <sequence resource="EMBL-CDS" id="AAF25661"/>
    </conflict>
</comment>
<comment type="sequence caution" evidence="18">
    <conflict type="erroneous initiation">
        <sequence resource="EMBL-CDS" id="AAF25662"/>
    </conflict>
</comment>
<comment type="sequence caution" evidence="18">
    <conflict type="erroneous termination">
        <sequence resource="EMBL-CDS" id="AAQ89109"/>
    </conflict>
    <text>Truncated C-terminus.</text>
</comment>
<reference key="1">
    <citation type="journal article" date="2001" name="J. Biol. Chem.">
        <title>Apolipoprotein A-V. A novel apolipoprotein associated with an early phase of liver regeneration.</title>
        <authorList>
            <person name="van Der Vliet H.N."/>
            <person name="Sammels M.G."/>
            <person name="Leegwater A.C.J."/>
            <person name="Levels J.H.M."/>
            <person name="Reitsma P.H."/>
            <person name="Boers W."/>
            <person name="Chamuleau R.A.F.M."/>
        </authorList>
    </citation>
    <scope>NUCLEOTIDE SEQUENCE [MRNA]</scope>
    <scope>TISSUE SPECIFICITY</scope>
    <source>
        <tissue>Liver</tissue>
    </source>
</reference>
<reference key="2">
    <citation type="journal article" date="2004" name="Hum. Genet.">
        <title>The effects of scale: variation in the APOA1/C3/A4/A5 gene cluster.</title>
        <authorList>
            <person name="Fullerton S.M."/>
            <person name="Buchanan A.V."/>
            <person name="Sonpar V.A."/>
            <person name="Taylor S.L."/>
            <person name="Smith J.D."/>
            <person name="Carlson C.S."/>
            <person name="Salomaa V."/>
            <person name="Stengaard J.H."/>
            <person name="Boerwinkle E."/>
            <person name="Clark A.G."/>
            <person name="Nickerson D.A."/>
            <person name="Weiss K.M."/>
        </authorList>
    </citation>
    <scope>NUCLEOTIDE SEQUENCE [GENOMIC DNA]</scope>
    <scope>VARIANTS TRP-19 AND MET-153</scope>
</reference>
<reference key="3">
    <citation type="journal article" date="2003" name="Genome Res.">
        <title>The secreted protein discovery initiative (SPDI), a large-scale effort to identify novel human secreted and transmembrane proteins: a bioinformatics assessment.</title>
        <authorList>
            <person name="Clark H.F."/>
            <person name="Gurney A.L."/>
            <person name="Abaya E."/>
            <person name="Baker K."/>
            <person name="Baldwin D.T."/>
            <person name="Brush J."/>
            <person name="Chen J."/>
            <person name="Chow B."/>
            <person name="Chui C."/>
            <person name="Crowley C."/>
            <person name="Currell B."/>
            <person name="Deuel B."/>
            <person name="Dowd P."/>
            <person name="Eaton D."/>
            <person name="Foster J.S."/>
            <person name="Grimaldi C."/>
            <person name="Gu Q."/>
            <person name="Hass P.E."/>
            <person name="Heldens S."/>
            <person name="Huang A."/>
            <person name="Kim H.S."/>
            <person name="Klimowski L."/>
            <person name="Jin Y."/>
            <person name="Johnson S."/>
            <person name="Lee J."/>
            <person name="Lewis L."/>
            <person name="Liao D."/>
            <person name="Mark M.R."/>
            <person name="Robbie E."/>
            <person name="Sanchez C."/>
            <person name="Schoenfeld J."/>
            <person name="Seshagiri S."/>
            <person name="Simmons L."/>
            <person name="Singh J."/>
            <person name="Smith V."/>
            <person name="Stinson J."/>
            <person name="Vagts A."/>
            <person name="Vandlen R.L."/>
            <person name="Watanabe C."/>
            <person name="Wieand D."/>
            <person name="Woods K."/>
            <person name="Xie M.-H."/>
            <person name="Yansura D.G."/>
            <person name="Yi S."/>
            <person name="Yu G."/>
            <person name="Yuan J."/>
            <person name="Zhang M."/>
            <person name="Zhang Z."/>
            <person name="Goddard A.D."/>
            <person name="Wood W.I."/>
            <person name="Godowski P.J."/>
            <person name="Gray A.M."/>
        </authorList>
    </citation>
    <scope>NUCLEOTIDE SEQUENCE [LARGE SCALE MRNA]</scope>
</reference>
<reference key="4">
    <citation type="submission" date="2007-02" db="EMBL/GenBank/DDBJ databases">
        <authorList>
            <consortium name="NHLBI resequencing and genotyping service (RS&amp;G)"/>
        </authorList>
    </citation>
    <scope>NUCLEOTIDE SEQUENCE [GENOMIC DNA]</scope>
</reference>
<reference key="5">
    <citation type="journal article" date="2004" name="Genome Res.">
        <title>The status, quality, and expansion of the NIH full-length cDNA project: the Mammalian Gene Collection (MGC).</title>
        <authorList>
            <consortium name="The MGC Project Team"/>
        </authorList>
    </citation>
    <scope>NUCLEOTIDE SEQUENCE [LARGE SCALE MRNA]</scope>
    <source>
        <tissue>Liver</tissue>
    </source>
</reference>
<reference key="6">
    <citation type="journal article" date="2001" name="Science">
        <title>An apolipoprotein influencing triglycerides in humans and mice revealed by comparative sequencing.</title>
        <authorList>
            <person name="Pennacchio L.A."/>
            <person name="Olivier M."/>
            <person name="Hubacek J.A."/>
            <person name="Cohen J.C."/>
            <person name="Cox D.R."/>
            <person name="Fruchart J.-C."/>
            <person name="Krauss R.M."/>
            <person name="Rubin E.M."/>
        </authorList>
    </citation>
    <scope>FUNCTION</scope>
    <scope>TISSUE SPECIFICITY</scope>
</reference>
<reference key="7">
    <citation type="journal article" date="2003" name="Biochemistry">
        <title>Structure-function studies of human apolipoprotein A-V: a regulator of plasma lipid homeostasis.</title>
        <authorList>
            <person name="Beckstead J.A."/>
            <person name="Oda M.N."/>
            <person name="Martin D.D.O."/>
            <person name="Forte T.M."/>
            <person name="Bielicki J.K."/>
            <person name="Berger T."/>
            <person name="Luty R."/>
            <person name="Kay C.M."/>
            <person name="Ryan R.O."/>
        </authorList>
    </citation>
    <scope>FUNCTION</scope>
</reference>
<reference key="8">
    <citation type="journal article" date="2003" name="J. Biol. Chem.">
        <title>The human apolipoprotein AV gene is regulated by peroxisome proliferator-activated receptor-alpha and contains a novel farnesoid X-activated receptor response element.</title>
        <authorList>
            <person name="Prieur X."/>
            <person name="Coste H."/>
            <person name="Rodriguez J.C."/>
        </authorList>
    </citation>
    <scope>INDUCTION</scope>
</reference>
<reference key="9">
    <citation type="journal article" date="2003" name="J. Biol. Chem.">
        <title>Structure and interfacial properties of human apolipoprotein A-V.</title>
        <authorList>
            <person name="Weinberg R.B."/>
            <person name="Cook V.R."/>
            <person name="Beckstead J.A."/>
            <person name="Martin D.D.O."/>
            <person name="Gallagher J.W."/>
            <person name="Shelness G.S."/>
            <person name="Ryan R.O."/>
        </authorList>
    </citation>
    <scope>SUBCELLULAR LOCATION</scope>
</reference>
<reference key="10">
    <citation type="journal article" date="2005" name="Clin. Chem.">
        <title>The novel apolipoprotein A5 is present in human serum, is associated with VLDL, HDL, and chylomicrons, and circulates at very low concentrations compared with other apolipoproteins.</title>
        <authorList>
            <person name="O'Brien P.J."/>
            <person name="Alborn W.E."/>
            <person name="Sloan J.H."/>
            <person name="Ulmer M."/>
            <person name="Boodhoo A."/>
            <person name="Knierman M.D."/>
            <person name="Schultze A.E."/>
            <person name="Konrad R.J."/>
        </authorList>
    </citation>
    <scope>FUNCTION</scope>
    <scope>TISSUE SPECIFICITY</scope>
</reference>
<reference key="11">
    <citation type="journal article" date="2007" name="Biochemistry">
        <title>Apolipoprotein A-V interaction with members of the low density lipoprotein receptor gene family.</title>
        <authorList>
            <person name="Nilsson S.K."/>
            <person name="Lookene A."/>
            <person name="Beckstead J.A."/>
            <person name="Gliemann J."/>
            <person name="Ryan R.O."/>
            <person name="Olivecrona G."/>
        </authorList>
    </citation>
    <scope>INTERACTION WITH SORL1</scope>
    <scope>BINDING TO HEPARIN</scope>
    <scope>MUTAGENESIS OF 233-ARG-LYS-234</scope>
</reference>
<reference key="12">
    <citation type="journal article" date="2007" name="Biochim. Biophys. Acta">
        <title>Normal binding of lipoprotein lipase, chylomicrons, and apo-AV to GPIHBP1 containing a G56R amino acid substitution.</title>
        <authorList>
            <person name="Gin P."/>
            <person name="Beigneux A.P."/>
            <person name="Davies B."/>
            <person name="Young M.F."/>
            <person name="Ryan R.O."/>
            <person name="Bensadoun A."/>
            <person name="Fong L.G."/>
            <person name="Young S.G."/>
        </authorList>
    </citation>
    <scope>INTERACTION WITH GPIHBP1</scope>
</reference>
<reference key="13">
    <citation type="journal article" date="2008" name="J. Biol. Chem.">
        <title>Endocytosis of apolipoprotein A-V by members of the low density lipoprotein receptor and the VPS10p domain receptor families.</title>
        <authorList>
            <person name="Nilsson S.K."/>
            <person name="Christensen S."/>
            <person name="Raarup M.K."/>
            <person name="Ryan R.O."/>
            <person name="Nielsen M.S."/>
            <person name="Olivecrona G."/>
        </authorList>
    </citation>
    <scope>INTERACTION WITH SORL1</scope>
    <scope>SUBCELLULAR LOCATION</scope>
</reference>
<reference key="14">
    <citation type="journal article" date="2014" name="J. Proteomics">
        <title>An enzyme assisted RP-RPLC approach for in-depth analysis of human liver phosphoproteome.</title>
        <authorList>
            <person name="Bian Y."/>
            <person name="Song C."/>
            <person name="Cheng K."/>
            <person name="Dong M."/>
            <person name="Wang F."/>
            <person name="Huang J."/>
            <person name="Sun D."/>
            <person name="Wang L."/>
            <person name="Ye M."/>
            <person name="Zou H."/>
        </authorList>
    </citation>
    <scope>PHOSPHORYLATION [LARGE SCALE ANALYSIS] AT SER-59</scope>
    <scope>IDENTIFICATION BY MASS SPECTROMETRY [LARGE SCALE ANALYSIS]</scope>
    <source>
        <tissue>Liver</tissue>
    </source>
</reference>
<reference key="15">
    <citation type="journal article" date="2015" name="Cell">
        <title>A single kinase generates the majority of the secreted phosphoproteome.</title>
        <authorList>
            <person name="Tagliabracci V.S."/>
            <person name="Wiley S.E."/>
            <person name="Guo X."/>
            <person name="Kinch L.N."/>
            <person name="Durrant E."/>
            <person name="Wen J."/>
            <person name="Xiao J."/>
            <person name="Cui J."/>
            <person name="Nguyen K.B."/>
            <person name="Engel J.L."/>
            <person name="Coon J.J."/>
            <person name="Grishin N."/>
            <person name="Pinna L.A."/>
            <person name="Pagliarini D.J."/>
            <person name="Dixon J.E."/>
        </authorList>
    </citation>
    <scope>PHOSPHORYLATION AT THR-55</scope>
</reference>
<reference key="16">
    <citation type="journal article" date="2002" name="Hum. Mol. Genet.">
        <title>Two independent apolipoprotein A5 haplotypes influence human plasma triglyceride levels.</title>
        <authorList>
            <person name="Pennacchio L.A."/>
            <person name="Olivier M."/>
            <person name="Hubacek J.A."/>
            <person name="Krauss R.M."/>
            <person name="Rubin E.M."/>
            <person name="Cohen J.C."/>
        </authorList>
    </citation>
    <scope>POLYMORPHISM</scope>
    <scope>VARIANT TRP-19</scope>
</reference>
<reference key="17">
    <citation type="journal article" date="2003" name="J. Med. Genet.">
        <title>Ser19Trp polymorphism within the apolipoprotein AV gene in hypertriglyceridaemic people.</title>
        <authorList>
            <person name="Vrablik M."/>
            <person name="Horinek A."/>
            <person name="Ceska R."/>
            <person name="Adamkova V."/>
            <person name="Poledne R."/>
            <person name="Hubacek J.A."/>
        </authorList>
    </citation>
    <scope>VARIANT TRP-19</scope>
</reference>
<reference key="18">
    <citation type="journal article" date="2003" name="Hum. Mol. Genet.">
        <title>A novel genetic variant in the apolipoprotein A5 gene is associated with hypertriglyceridemia.</title>
        <authorList>
            <person name="Kao J.-T."/>
            <person name="Wen H.-C."/>
            <person name="Chien K.-L."/>
            <person name="Hsu H.-C."/>
            <person name="Lin S.-W."/>
        </authorList>
    </citation>
    <scope>VARIANT CYS-185</scope>
</reference>
<reference key="19">
    <citation type="journal article" date="2005" name="J. Clin. Invest.">
        <title>Apoa5 Q139X truncation predisposes to late-onset hyperchylomicronemia due to lipoprotein lipase impairment.</title>
        <authorList>
            <person name="Marcais C."/>
            <person name="Verges B."/>
            <person name="Charriere S."/>
            <person name="Pruneta V."/>
            <person name="Merlin M."/>
            <person name="Billon S."/>
            <person name="Perrot L."/>
            <person name="Drai J."/>
            <person name="Sassolas A."/>
            <person name="Pennacchio L.A."/>
            <person name="Fruchart-Najib J."/>
            <person name="Fruchart J.C."/>
            <person name="Durlach V."/>
            <person name="Moulin P."/>
        </authorList>
    </citation>
    <scope>INVOLVEMENT IN HLPP5</scope>
</reference>
<feature type="signal peptide" evidence="2">
    <location>
        <begin position="1"/>
        <end position="23"/>
    </location>
</feature>
<feature type="chain" id="PRO_0000001981" description="Apolipoprotein A-V">
    <location>
        <begin position="24"/>
        <end position="366"/>
    </location>
</feature>
<feature type="coiled-coil region" evidence="2">
    <location>
        <begin position="54"/>
        <end position="157"/>
    </location>
</feature>
<feature type="coiled-coil region" evidence="2">
    <location>
        <begin position="236"/>
        <end position="262"/>
    </location>
</feature>
<feature type="modified residue" description="Phosphothreonine; by FAM20C" evidence="17">
    <location>
        <position position="55"/>
    </location>
</feature>
<feature type="modified residue" description="Phosphoserine" evidence="19">
    <location>
        <position position="59"/>
    </location>
</feature>
<feature type="sequence variant" id="VAR_021165" description="In allele APOA5*3; correlated with high plasma triglyceride levels; dbSNP:rs3135506." evidence="5 10 11">
    <original>S</original>
    <variation>W</variation>
    <location>
        <position position="19"/>
    </location>
</feature>
<feature type="sequence variant" id="VAR_035124" description="In dbSNP:rs34282181.">
    <original>D</original>
    <variation>E</variation>
    <location>
        <position position="37"/>
    </location>
</feature>
<feature type="sequence variant" id="VAR_021166" description="In dbSNP:rs3135507." evidence="11">
    <original>V</original>
    <variation>M</variation>
    <location>
        <position position="153"/>
    </location>
</feature>
<feature type="sequence variant" id="VAR_021167" description="Correlated with high plasma triglyceride levels; dbSNP:rs2075291." evidence="9">
    <original>G</original>
    <variation>C</variation>
    <location>
        <position position="185"/>
    </location>
</feature>
<feature type="mutagenesis site" description="Decreased heparin-binding." evidence="14">
    <original>RK</original>
    <variation>EQ</variation>
    <location>
        <begin position="233"/>
        <end position="234"/>
    </location>
</feature>
<dbReference type="EMBL" id="AF202889">
    <property type="protein sequence ID" value="AAF25661.1"/>
    <property type="status" value="ALT_INIT"/>
    <property type="molecule type" value="mRNA"/>
</dbReference>
<dbReference type="EMBL" id="AF202890">
    <property type="protein sequence ID" value="AAF25662.1"/>
    <property type="status" value="ALT_INIT"/>
    <property type="molecule type" value="mRNA"/>
</dbReference>
<dbReference type="EMBL" id="AY555191">
    <property type="protein sequence ID" value="AAS68229.1"/>
    <property type="molecule type" value="Genomic_DNA"/>
</dbReference>
<dbReference type="EMBL" id="AY422949">
    <property type="protein sequence ID" value="AAQ91808.1"/>
    <property type="molecule type" value="Genomic_DNA"/>
</dbReference>
<dbReference type="EMBL" id="AY358749">
    <property type="protein sequence ID" value="AAQ89109.1"/>
    <property type="status" value="ALT_SEQ"/>
    <property type="molecule type" value="mRNA"/>
</dbReference>
<dbReference type="EMBL" id="EF444949">
    <property type="protein sequence ID" value="ACA05937.1"/>
    <property type="molecule type" value="Genomic_DNA"/>
</dbReference>
<dbReference type="EMBL" id="EF444949">
    <property type="protein sequence ID" value="ACA05938.1"/>
    <property type="molecule type" value="Genomic_DNA"/>
</dbReference>
<dbReference type="EMBL" id="BC101787">
    <property type="protein sequence ID" value="AAI01788.1"/>
    <property type="molecule type" value="mRNA"/>
</dbReference>
<dbReference type="EMBL" id="BC101789">
    <property type="protein sequence ID" value="AAI01790.1"/>
    <property type="molecule type" value="mRNA"/>
</dbReference>
<dbReference type="CCDS" id="CCDS8376.2"/>
<dbReference type="RefSeq" id="NP_001160070.1">
    <property type="nucleotide sequence ID" value="NM_001166598.2"/>
</dbReference>
<dbReference type="RefSeq" id="NP_001358833.1">
    <property type="nucleotide sequence ID" value="NM_001371904.1"/>
</dbReference>
<dbReference type="RefSeq" id="NP_443200.2">
    <property type="nucleotide sequence ID" value="NM_052968.5"/>
</dbReference>
<dbReference type="RefSeq" id="XP_016872658.1">
    <property type="nucleotide sequence ID" value="XM_017017169.1"/>
</dbReference>
<dbReference type="SMR" id="Q6Q788"/>
<dbReference type="BioGRID" id="125518">
    <property type="interactions" value="16"/>
</dbReference>
<dbReference type="FunCoup" id="Q6Q788">
    <property type="interactions" value="106"/>
</dbReference>
<dbReference type="IntAct" id="Q6Q788">
    <property type="interactions" value="22"/>
</dbReference>
<dbReference type="STRING" id="9606.ENSP00000445002"/>
<dbReference type="GlyGen" id="Q6Q788">
    <property type="glycosylation" value="2 sites, 1 O-linked glycan (2 sites)"/>
</dbReference>
<dbReference type="iPTMnet" id="Q6Q788"/>
<dbReference type="PhosphoSitePlus" id="Q6Q788"/>
<dbReference type="BioMuta" id="APOA5"/>
<dbReference type="DMDM" id="60391728"/>
<dbReference type="jPOST" id="Q6Q788"/>
<dbReference type="MassIVE" id="Q6Q788"/>
<dbReference type="PaxDb" id="9606-ENSP00000445002"/>
<dbReference type="PeptideAtlas" id="Q6Q788"/>
<dbReference type="ProteomicsDB" id="67276"/>
<dbReference type="Antibodypedia" id="32277">
    <property type="antibodies" value="771 antibodies from 32 providers"/>
</dbReference>
<dbReference type="DNASU" id="116519"/>
<dbReference type="Ensembl" id="ENST00000227665.9">
    <property type="protein sequence ID" value="ENSP00000227665.4"/>
    <property type="gene ID" value="ENSG00000110243.12"/>
</dbReference>
<dbReference type="Ensembl" id="ENST00000433069.2">
    <property type="protein sequence ID" value="ENSP00000399701.2"/>
    <property type="gene ID" value="ENSG00000110243.12"/>
</dbReference>
<dbReference type="Ensembl" id="ENST00000542499.5">
    <property type="protein sequence ID" value="ENSP00000445002.1"/>
    <property type="gene ID" value="ENSG00000110243.12"/>
</dbReference>
<dbReference type="GeneID" id="116519"/>
<dbReference type="KEGG" id="hsa:116519"/>
<dbReference type="MANE-Select" id="ENST00000227665.9">
    <property type="protein sequence ID" value="ENSP00000227665.4"/>
    <property type="RefSeq nucleotide sequence ID" value="NM_001371904.1"/>
    <property type="RefSeq protein sequence ID" value="NP_001358833.1"/>
</dbReference>
<dbReference type="UCSC" id="uc001ppr.4">
    <property type="organism name" value="human"/>
</dbReference>
<dbReference type="AGR" id="HGNC:17288"/>
<dbReference type="CTD" id="116519"/>
<dbReference type="DisGeNET" id="116519"/>
<dbReference type="GeneCards" id="APOA5"/>
<dbReference type="HGNC" id="HGNC:17288">
    <property type="gene designation" value="APOA5"/>
</dbReference>
<dbReference type="HPA" id="ENSG00000110243">
    <property type="expression patterns" value="Tissue enriched (liver)"/>
</dbReference>
<dbReference type="MalaCards" id="APOA5"/>
<dbReference type="MIM" id="144650">
    <property type="type" value="phenotype"/>
</dbReference>
<dbReference type="MIM" id="145750">
    <property type="type" value="phenotype"/>
</dbReference>
<dbReference type="MIM" id="606368">
    <property type="type" value="gene"/>
</dbReference>
<dbReference type="neXtProt" id="NX_Q6Q788"/>
<dbReference type="OpenTargets" id="ENSG00000110243"/>
<dbReference type="Orphanet" id="530849">
    <property type="disease" value="Familial apolipoprotein A5 deficiency"/>
</dbReference>
<dbReference type="PharmGKB" id="PA24888"/>
<dbReference type="VEuPathDB" id="HostDB:ENSG00000110243"/>
<dbReference type="eggNOG" id="ENOG502S33P">
    <property type="taxonomic scope" value="Eukaryota"/>
</dbReference>
<dbReference type="GeneTree" id="ENSGT00950000182929"/>
<dbReference type="HOGENOM" id="CLU_747959_0_0_1"/>
<dbReference type="InParanoid" id="Q6Q788"/>
<dbReference type="OMA" id="HERVGWN"/>
<dbReference type="OrthoDB" id="9886755at2759"/>
<dbReference type="PAN-GO" id="Q6Q788">
    <property type="GO annotations" value="19 GO annotations based on evolutionary models"/>
</dbReference>
<dbReference type="PhylomeDB" id="Q6Q788"/>
<dbReference type="TreeFam" id="TF334458"/>
<dbReference type="PathwayCommons" id="Q6Q788"/>
<dbReference type="Reactome" id="R-HSA-1989781">
    <property type="pathway name" value="PPARA activates gene expression"/>
</dbReference>
<dbReference type="Reactome" id="R-HSA-381426">
    <property type="pathway name" value="Regulation of Insulin-like Growth Factor (IGF) transport and uptake by Insulin-like Growth Factor Binding Proteins (IGFBPs)"/>
</dbReference>
<dbReference type="Reactome" id="R-HSA-8957275">
    <property type="pathway name" value="Post-translational protein phosphorylation"/>
</dbReference>
<dbReference type="Reactome" id="R-HSA-8963889">
    <property type="pathway name" value="Assembly of active LPL and LIPC lipase complexes"/>
</dbReference>
<dbReference type="Reactome" id="R-HSA-8963901">
    <property type="pathway name" value="Chylomicron remodeling"/>
</dbReference>
<dbReference type="SignaLink" id="Q6Q788"/>
<dbReference type="SIGNOR" id="Q6Q788"/>
<dbReference type="BioGRID-ORCS" id="116519">
    <property type="hits" value="10 hits in 1147 CRISPR screens"/>
</dbReference>
<dbReference type="GeneWiki" id="APOA5"/>
<dbReference type="GenomeRNAi" id="116519"/>
<dbReference type="Pharos" id="Q6Q788">
    <property type="development level" value="Tbio"/>
</dbReference>
<dbReference type="PRO" id="PR:Q6Q788"/>
<dbReference type="Proteomes" id="UP000005640">
    <property type="component" value="Chromosome 11"/>
</dbReference>
<dbReference type="RNAct" id="Q6Q788">
    <property type="molecule type" value="protein"/>
</dbReference>
<dbReference type="Bgee" id="ENSG00000110243">
    <property type="expression patterns" value="Expressed in right lobe of liver and 51 other cell types or tissues"/>
</dbReference>
<dbReference type="ExpressionAtlas" id="Q6Q788">
    <property type="expression patterns" value="baseline and differential"/>
</dbReference>
<dbReference type="GO" id="GO:0042627">
    <property type="term" value="C:chylomicron"/>
    <property type="evidence" value="ECO:0000314"/>
    <property type="project" value="UniProtKB"/>
</dbReference>
<dbReference type="GO" id="GO:0005769">
    <property type="term" value="C:early endosome"/>
    <property type="evidence" value="ECO:0007669"/>
    <property type="project" value="UniProtKB-SubCell"/>
</dbReference>
<dbReference type="GO" id="GO:0005788">
    <property type="term" value="C:endoplasmic reticulum lumen"/>
    <property type="evidence" value="ECO:0000304"/>
    <property type="project" value="Reactome"/>
</dbReference>
<dbReference type="GO" id="GO:0005576">
    <property type="term" value="C:extracellular region"/>
    <property type="evidence" value="ECO:0000314"/>
    <property type="project" value="UniProtKB"/>
</dbReference>
<dbReference type="GO" id="GO:0005615">
    <property type="term" value="C:extracellular space"/>
    <property type="evidence" value="ECO:0000314"/>
    <property type="project" value="BHF-UCL"/>
</dbReference>
<dbReference type="GO" id="GO:1903561">
    <property type="term" value="C:extracellular vesicle"/>
    <property type="evidence" value="ECO:0000318"/>
    <property type="project" value="GO_Central"/>
</dbReference>
<dbReference type="GO" id="GO:0005794">
    <property type="term" value="C:Golgi apparatus"/>
    <property type="evidence" value="ECO:0007669"/>
    <property type="project" value="UniProtKB-SubCell"/>
</dbReference>
<dbReference type="GO" id="GO:0034364">
    <property type="term" value="C:high-density lipoprotein particle"/>
    <property type="evidence" value="ECO:0000314"/>
    <property type="project" value="BHF-UCL"/>
</dbReference>
<dbReference type="GO" id="GO:0005770">
    <property type="term" value="C:late endosome"/>
    <property type="evidence" value="ECO:0007669"/>
    <property type="project" value="UniProtKB-SubCell"/>
</dbReference>
<dbReference type="GO" id="GO:0034361">
    <property type="term" value="C:very-low-density lipoprotein particle"/>
    <property type="evidence" value="ECO:0000314"/>
    <property type="project" value="BHF-UCL"/>
</dbReference>
<dbReference type="GO" id="GO:0120020">
    <property type="term" value="F:cholesterol transfer activity"/>
    <property type="evidence" value="ECO:0000318"/>
    <property type="project" value="GO_Central"/>
</dbReference>
<dbReference type="GO" id="GO:0019899">
    <property type="term" value="F:enzyme binding"/>
    <property type="evidence" value="ECO:0000314"/>
    <property type="project" value="BHF-UCL"/>
</dbReference>
<dbReference type="GO" id="GO:0008201">
    <property type="term" value="F:heparin binding"/>
    <property type="evidence" value="ECO:0000314"/>
    <property type="project" value="BHF-UCL"/>
</dbReference>
<dbReference type="GO" id="GO:0060229">
    <property type="term" value="F:lipase activator activity"/>
    <property type="evidence" value="ECO:0000315"/>
    <property type="project" value="BHF-UCL"/>
</dbReference>
<dbReference type="GO" id="GO:0035473">
    <property type="term" value="F:lipase binding"/>
    <property type="evidence" value="ECO:0000353"/>
    <property type="project" value="BHF-UCL"/>
</dbReference>
<dbReference type="GO" id="GO:0008289">
    <property type="term" value="F:lipid binding"/>
    <property type="evidence" value="ECO:0000314"/>
    <property type="project" value="UniProtKB"/>
</dbReference>
<dbReference type="GO" id="GO:0060230">
    <property type="term" value="F:lipoprotein lipase activator activity"/>
    <property type="evidence" value="ECO:0000314"/>
    <property type="project" value="BHF-UCL"/>
</dbReference>
<dbReference type="GO" id="GO:0070325">
    <property type="term" value="F:lipoprotein particle receptor binding"/>
    <property type="evidence" value="ECO:0000353"/>
    <property type="project" value="BHF-UCL"/>
</dbReference>
<dbReference type="GO" id="GO:0050750">
    <property type="term" value="F:low-density lipoprotein particle receptor binding"/>
    <property type="evidence" value="ECO:0000353"/>
    <property type="project" value="BHF-UCL"/>
</dbReference>
<dbReference type="GO" id="GO:0031210">
    <property type="term" value="F:phosphatidylcholine binding"/>
    <property type="evidence" value="ECO:0000314"/>
    <property type="project" value="BHF-UCL"/>
</dbReference>
<dbReference type="GO" id="GO:0060228">
    <property type="term" value="F:phosphatidylcholine-sterol O-acyltransferase activator activity"/>
    <property type="evidence" value="ECO:0000318"/>
    <property type="project" value="GO_Central"/>
</dbReference>
<dbReference type="GO" id="GO:0005543">
    <property type="term" value="F:phospholipid binding"/>
    <property type="evidence" value="ECO:0000314"/>
    <property type="project" value="BHF-UCL"/>
</dbReference>
<dbReference type="GO" id="GO:0055090">
    <property type="term" value="P:acylglycerol homeostasis"/>
    <property type="evidence" value="ECO:0000314"/>
    <property type="project" value="BHF-UCL"/>
</dbReference>
<dbReference type="GO" id="GO:0033344">
    <property type="term" value="P:cholesterol efflux"/>
    <property type="evidence" value="ECO:0000318"/>
    <property type="project" value="GO_Central"/>
</dbReference>
<dbReference type="GO" id="GO:0042632">
    <property type="term" value="P:cholesterol homeostasis"/>
    <property type="evidence" value="ECO:0000314"/>
    <property type="project" value="BHF-UCL"/>
</dbReference>
<dbReference type="GO" id="GO:0008203">
    <property type="term" value="P:cholesterol metabolic process"/>
    <property type="evidence" value="ECO:0000318"/>
    <property type="project" value="GO_Central"/>
</dbReference>
<dbReference type="GO" id="GO:0006869">
    <property type="term" value="P:lipid transport"/>
    <property type="evidence" value="ECO:0000314"/>
    <property type="project" value="BHF-UCL"/>
</dbReference>
<dbReference type="GO" id="GO:0042157">
    <property type="term" value="P:lipoprotein metabolic process"/>
    <property type="evidence" value="ECO:0007669"/>
    <property type="project" value="InterPro"/>
</dbReference>
<dbReference type="GO" id="GO:0033700">
    <property type="term" value="P:phospholipid efflux"/>
    <property type="evidence" value="ECO:0000318"/>
    <property type="project" value="GO_Central"/>
</dbReference>
<dbReference type="GO" id="GO:0045723">
    <property type="term" value="P:positive regulation of fatty acid biosynthetic process"/>
    <property type="evidence" value="ECO:0000314"/>
    <property type="project" value="BHF-UCL"/>
</dbReference>
<dbReference type="GO" id="GO:0050996">
    <property type="term" value="P:positive regulation of lipid catabolic process"/>
    <property type="evidence" value="ECO:0000314"/>
    <property type="project" value="BHF-UCL"/>
</dbReference>
<dbReference type="GO" id="GO:0048260">
    <property type="term" value="P:positive regulation of receptor-mediated endocytosis"/>
    <property type="evidence" value="ECO:0000304"/>
    <property type="project" value="BHF-UCL"/>
</dbReference>
<dbReference type="GO" id="GO:0010898">
    <property type="term" value="P:positive regulation of triglyceride catabolic process"/>
    <property type="evidence" value="ECO:0000314"/>
    <property type="project" value="BHF-UCL"/>
</dbReference>
<dbReference type="GO" id="GO:0010902">
    <property type="term" value="P:positive regulation of very-low-density lipoprotein particle remodeling"/>
    <property type="evidence" value="ECO:0000314"/>
    <property type="project" value="BHF-UCL"/>
</dbReference>
<dbReference type="GO" id="GO:0042246">
    <property type="term" value="P:tissue regeneration"/>
    <property type="evidence" value="ECO:0000270"/>
    <property type="project" value="UniProtKB"/>
</dbReference>
<dbReference type="GO" id="GO:0019433">
    <property type="term" value="P:triglyceride catabolic process"/>
    <property type="evidence" value="ECO:0000315"/>
    <property type="project" value="BHF-UCL"/>
</dbReference>
<dbReference type="GO" id="GO:0070328">
    <property type="term" value="P:triglyceride homeostasis"/>
    <property type="evidence" value="ECO:0000314"/>
    <property type="project" value="BHF-UCL"/>
</dbReference>
<dbReference type="GO" id="GO:0006641">
    <property type="term" value="P:triglyceride metabolic process"/>
    <property type="evidence" value="ECO:0000314"/>
    <property type="project" value="BHF-UCL"/>
</dbReference>
<dbReference type="GO" id="GO:0034370">
    <property type="term" value="P:triglyceride-rich lipoprotein particle remodeling"/>
    <property type="evidence" value="ECO:0007669"/>
    <property type="project" value="Ensembl"/>
</dbReference>
<dbReference type="GO" id="GO:0034447">
    <property type="term" value="P:very-low-density lipoprotein particle clearance"/>
    <property type="evidence" value="ECO:0000314"/>
    <property type="project" value="BHF-UCL"/>
</dbReference>
<dbReference type="FunFam" id="1.20.120.20:FF:000006">
    <property type="entry name" value="Apolipoprotein A-V"/>
    <property type="match status" value="1"/>
</dbReference>
<dbReference type="FunFam" id="1.20.120.20:FF:000009">
    <property type="entry name" value="apolipoprotein A-V"/>
    <property type="match status" value="1"/>
</dbReference>
<dbReference type="Gene3D" id="1.20.120.20">
    <property type="entry name" value="Apolipoprotein"/>
    <property type="match status" value="2"/>
</dbReference>
<dbReference type="InterPro" id="IPR000074">
    <property type="entry name" value="ApoA_E"/>
</dbReference>
<dbReference type="InterPro" id="IPR050163">
    <property type="entry name" value="Apolipoprotein_A1/A4/E"/>
</dbReference>
<dbReference type="PANTHER" id="PTHR18976">
    <property type="entry name" value="APOLIPOPROTEIN"/>
    <property type="match status" value="1"/>
</dbReference>
<dbReference type="PANTHER" id="PTHR18976:SF13">
    <property type="entry name" value="APOLIPOPROTEIN A-V"/>
    <property type="match status" value="1"/>
</dbReference>
<dbReference type="Pfam" id="PF01442">
    <property type="entry name" value="Apolipoprotein"/>
    <property type="match status" value="2"/>
</dbReference>
<dbReference type="SUPFAM" id="SSF58113">
    <property type="entry name" value="Apolipoprotein A-I"/>
    <property type="match status" value="1"/>
</dbReference>